<protein>
    <recommendedName>
        <fullName>Galectin-5</fullName>
        <shortName>Gal-5</shortName>
    </recommendedName>
    <alternativeName>
        <fullName>RL-18</fullName>
    </alternativeName>
</protein>
<comment type="function">
    <text>May function in erythrocyte differentiation.</text>
</comment>
<comment type="subunit">
    <text>Monomer.</text>
</comment>
<comment type="tissue specificity">
    <text>Erythrocytes.</text>
</comment>
<proteinExistence type="evidence at protein level"/>
<name>LEG5_RAT</name>
<accession>P47967</accession>
<evidence type="ECO:0000255" key="1"/>
<evidence type="ECO:0000255" key="2">
    <source>
        <dbReference type="PROSITE-ProRule" id="PRU00639"/>
    </source>
</evidence>
<evidence type="ECO:0000269" key="3">
    <source>
    </source>
</evidence>
<evidence type="ECO:0000305" key="4"/>
<evidence type="ECO:0007829" key="5">
    <source>
        <dbReference type="PDB" id="5JP5"/>
    </source>
</evidence>
<gene>
    <name type="primary">Lgals5</name>
</gene>
<keyword id="KW-0002">3D-structure</keyword>
<keyword id="KW-0007">Acetylation</keyword>
<keyword id="KW-0903">Direct protein sequencing</keyword>
<keyword id="KW-0430">Lectin</keyword>
<keyword id="KW-1185">Reference proteome</keyword>
<sequence length="145" mass="16196">MSSFSTQTPYPNLAVPFFTSIPNGLYPSKSIVISGVVLSDAKRFQINLRCGGDIAFHLNPRFDENAVVRNTQINNSWGPEERSLPGSMPFSRGQRFSVWILCEGHCFKVAVDGQHICEYSHRLMNLPDINTLEVAGDIQLTHVET</sequence>
<organism>
    <name type="scientific">Rattus norvegicus</name>
    <name type="common">Rat</name>
    <dbReference type="NCBI Taxonomy" id="10116"/>
    <lineage>
        <taxon>Eukaryota</taxon>
        <taxon>Metazoa</taxon>
        <taxon>Chordata</taxon>
        <taxon>Craniata</taxon>
        <taxon>Vertebrata</taxon>
        <taxon>Euteleostomi</taxon>
        <taxon>Mammalia</taxon>
        <taxon>Eutheria</taxon>
        <taxon>Euarchontoglires</taxon>
        <taxon>Glires</taxon>
        <taxon>Rodentia</taxon>
        <taxon>Myomorpha</taxon>
        <taxon>Muroidea</taxon>
        <taxon>Muridae</taxon>
        <taxon>Murinae</taxon>
        <taxon>Rattus</taxon>
    </lineage>
</organism>
<dbReference type="EMBL" id="L36862">
    <property type="protein sequence ID" value="AAC42050.1"/>
    <property type="molecule type" value="mRNA"/>
</dbReference>
<dbReference type="EMBL" id="L21711">
    <property type="protein sequence ID" value="AAA65445.1"/>
    <property type="molecule type" value="mRNA"/>
</dbReference>
<dbReference type="PIR" id="A55932">
    <property type="entry name" value="A55932"/>
</dbReference>
<dbReference type="RefSeq" id="NP_037108.1">
    <property type="nucleotide sequence ID" value="NM_012976.2"/>
</dbReference>
<dbReference type="PDB" id="5JP5">
    <property type="method" value="X-ray"/>
    <property type="resolution" value="1.70 A"/>
    <property type="chains" value="A/B/C/D/E/F=1-145"/>
</dbReference>
<dbReference type="PDB" id="5JPG">
    <property type="method" value="X-ray"/>
    <property type="resolution" value="1.90 A"/>
    <property type="chains" value="A/B=1-145"/>
</dbReference>
<dbReference type="PDBsum" id="5JP5"/>
<dbReference type="PDBsum" id="5JPG"/>
<dbReference type="SMR" id="P47967"/>
<dbReference type="FunCoup" id="P47967">
    <property type="interactions" value="7"/>
</dbReference>
<dbReference type="STRING" id="10116.ENSRNOP00000016897"/>
<dbReference type="UniLectin" id="P47967"/>
<dbReference type="GlyGen" id="P47967">
    <property type="glycosylation" value="1 site"/>
</dbReference>
<dbReference type="iPTMnet" id="P47967"/>
<dbReference type="PhosphoSitePlus" id="P47967"/>
<dbReference type="PaxDb" id="10116-ENSRNOP00000016897"/>
<dbReference type="GeneID" id="25475"/>
<dbReference type="KEGG" id="rno:25475"/>
<dbReference type="AGR" id="RGD:3004"/>
<dbReference type="CTD" id="25475"/>
<dbReference type="RGD" id="3004">
    <property type="gene designation" value="Lgals5"/>
</dbReference>
<dbReference type="eggNOG" id="KOG3587">
    <property type="taxonomic scope" value="Eukaryota"/>
</dbReference>
<dbReference type="InParanoid" id="P47967"/>
<dbReference type="OrthoDB" id="77571at9989"/>
<dbReference type="PhylomeDB" id="P47967"/>
<dbReference type="PRO" id="PR:P47967"/>
<dbReference type="Proteomes" id="UP000002494">
    <property type="component" value="Unplaced"/>
</dbReference>
<dbReference type="GO" id="GO:0005829">
    <property type="term" value="C:cytosol"/>
    <property type="evidence" value="ECO:0000318"/>
    <property type="project" value="GO_Central"/>
</dbReference>
<dbReference type="GO" id="GO:0005634">
    <property type="term" value="C:nucleus"/>
    <property type="evidence" value="ECO:0000318"/>
    <property type="project" value="GO_Central"/>
</dbReference>
<dbReference type="GO" id="GO:0030246">
    <property type="term" value="F:carbohydrate binding"/>
    <property type="evidence" value="ECO:0000318"/>
    <property type="project" value="GO_Central"/>
</dbReference>
<dbReference type="GO" id="GO:0016936">
    <property type="term" value="F:galactoside binding"/>
    <property type="evidence" value="ECO:0000318"/>
    <property type="project" value="GO_Central"/>
</dbReference>
<dbReference type="GO" id="GO:0030395">
    <property type="term" value="F:lactose binding"/>
    <property type="evidence" value="ECO:0000266"/>
    <property type="project" value="RGD"/>
</dbReference>
<dbReference type="GO" id="GO:2000562">
    <property type="term" value="P:negative regulation of CD4-positive, alpha-beta T cell proliferation"/>
    <property type="evidence" value="ECO:0000318"/>
    <property type="project" value="GO_Central"/>
</dbReference>
<dbReference type="GO" id="GO:0032689">
    <property type="term" value="P:negative regulation of type II interferon production"/>
    <property type="evidence" value="ECO:0000318"/>
    <property type="project" value="GO_Central"/>
</dbReference>
<dbReference type="GO" id="GO:0010628">
    <property type="term" value="P:positive regulation of gene expression"/>
    <property type="evidence" value="ECO:0000318"/>
    <property type="project" value="GO_Central"/>
</dbReference>
<dbReference type="GO" id="GO:0070234">
    <property type="term" value="P:positive regulation of T cell apoptotic process"/>
    <property type="evidence" value="ECO:0000266"/>
    <property type="project" value="RGD"/>
</dbReference>
<dbReference type="CDD" id="cd00070">
    <property type="entry name" value="GLECT"/>
    <property type="match status" value="1"/>
</dbReference>
<dbReference type="FunFam" id="2.60.120.200:FF:000023">
    <property type="entry name" value="Galectin"/>
    <property type="match status" value="1"/>
</dbReference>
<dbReference type="Gene3D" id="2.60.120.200">
    <property type="match status" value="1"/>
</dbReference>
<dbReference type="InterPro" id="IPR013320">
    <property type="entry name" value="ConA-like_dom_sf"/>
</dbReference>
<dbReference type="InterPro" id="IPR044156">
    <property type="entry name" value="Galectin-like"/>
</dbReference>
<dbReference type="InterPro" id="IPR001079">
    <property type="entry name" value="Galectin_CRD"/>
</dbReference>
<dbReference type="PANTHER" id="PTHR11346">
    <property type="entry name" value="GALECTIN"/>
    <property type="match status" value="1"/>
</dbReference>
<dbReference type="PANTHER" id="PTHR11346:SF80">
    <property type="entry name" value="GALECTIN-9C"/>
    <property type="match status" value="1"/>
</dbReference>
<dbReference type="Pfam" id="PF00337">
    <property type="entry name" value="Gal-bind_lectin"/>
    <property type="match status" value="1"/>
</dbReference>
<dbReference type="SMART" id="SM00908">
    <property type="entry name" value="Gal-bind_lectin"/>
    <property type="match status" value="1"/>
</dbReference>
<dbReference type="SMART" id="SM00276">
    <property type="entry name" value="GLECT"/>
    <property type="match status" value="1"/>
</dbReference>
<dbReference type="SUPFAM" id="SSF49899">
    <property type="entry name" value="Concanavalin A-like lectins/glucanases"/>
    <property type="match status" value="1"/>
</dbReference>
<dbReference type="PROSITE" id="PS51304">
    <property type="entry name" value="GALECTIN"/>
    <property type="match status" value="1"/>
</dbReference>
<reference key="1">
    <citation type="journal article" date="1995" name="J. Biol. Chem.">
        <title>Sequence and mapping of galectin-5, a beta-galactoside-binding lectin, found in rat erythrocytes.</title>
        <authorList>
            <person name="Gitt M.A."/>
            <person name="Wiser M.F."/>
            <person name="Leffler H."/>
            <person name="Herrmann J."/>
            <person name="Xia Y.-R."/>
            <person name="Massa S.M."/>
            <person name="Cooper D.N.W."/>
            <person name="Lusis A.J."/>
            <person name="Barondes S.H."/>
        </authorList>
    </citation>
    <scope>NUCLEOTIDE SEQUENCE [MRNA]</scope>
    <scope>PARTIAL PROTEIN SEQUENCE</scope>
    <scope>CLEAVAGE OF INITIATOR METHIONINE</scope>
    <scope>ACETYLATION AT SER-2</scope>
    <source>
        <tissue>Reticulocyte</tissue>
    </source>
</reference>
<feature type="initiator methionine" description="Removed" evidence="3">
    <location>
        <position position="1"/>
    </location>
</feature>
<feature type="chain" id="PRO_0000076938" description="Galectin-5">
    <location>
        <begin position="2"/>
        <end position="145"/>
    </location>
</feature>
<feature type="domain" description="Galectin" evidence="2">
    <location>
        <begin position="17"/>
        <end position="145"/>
    </location>
</feature>
<feature type="binding site" evidence="1">
    <location>
        <begin position="77"/>
        <end position="83"/>
    </location>
    <ligand>
        <name>a beta-D-galactoside</name>
        <dbReference type="ChEBI" id="CHEBI:28034"/>
    </ligand>
</feature>
<feature type="modified residue" description="N-acetylserine" evidence="3">
    <location>
        <position position="2"/>
    </location>
</feature>
<feature type="sequence conflict" description="In Ref. 1; AAA65445." evidence="4" ref="1">
    <location>
        <begin position="128"/>
        <end position="136"/>
    </location>
</feature>
<feature type="strand" evidence="5">
    <location>
        <begin position="3"/>
        <end position="10"/>
    </location>
</feature>
<feature type="strand" evidence="5">
    <location>
        <begin position="15"/>
        <end position="20"/>
    </location>
</feature>
<feature type="strand" evidence="5">
    <location>
        <begin position="30"/>
        <end position="37"/>
    </location>
</feature>
<feature type="strand" evidence="5">
    <location>
        <begin position="43"/>
        <end position="50"/>
    </location>
</feature>
<feature type="strand" evidence="5">
    <location>
        <begin position="53"/>
        <end position="61"/>
    </location>
</feature>
<feature type="turn" evidence="5">
    <location>
        <begin position="62"/>
        <end position="65"/>
    </location>
</feature>
<feature type="strand" evidence="5">
    <location>
        <begin position="66"/>
        <end position="73"/>
    </location>
</feature>
<feature type="strand" evidence="5">
    <location>
        <begin position="85"/>
        <end position="87"/>
    </location>
</feature>
<feature type="strand" evidence="5">
    <location>
        <begin position="95"/>
        <end position="102"/>
    </location>
</feature>
<feature type="strand" evidence="5">
    <location>
        <begin position="104"/>
        <end position="111"/>
    </location>
</feature>
<feature type="strand" evidence="5">
    <location>
        <begin position="114"/>
        <end position="120"/>
    </location>
</feature>
<feature type="helix" evidence="5">
    <location>
        <begin position="126"/>
        <end position="128"/>
    </location>
</feature>
<feature type="strand" evidence="5">
    <location>
        <begin position="131"/>
        <end position="144"/>
    </location>
</feature>